<protein>
    <recommendedName>
        <fullName>Putative uncharacterized protein DDB_G0267218</fullName>
    </recommendedName>
</protein>
<dbReference type="EMBL" id="AAFI02000001">
    <property type="protein sequence ID" value="EAL73846.1"/>
    <property type="molecule type" value="Genomic_DNA"/>
</dbReference>
<dbReference type="RefSeq" id="XP_647770.1">
    <property type="nucleotide sequence ID" value="XM_642678.1"/>
</dbReference>
<dbReference type="PaxDb" id="44689-DDB0216457"/>
<dbReference type="EnsemblProtists" id="EAL73846">
    <property type="protein sequence ID" value="EAL73846"/>
    <property type="gene ID" value="DDB_G0267218"/>
</dbReference>
<dbReference type="GeneID" id="8615796"/>
<dbReference type="KEGG" id="ddi:DDB_G0267218"/>
<dbReference type="dictyBase" id="DDB_G0267218"/>
<dbReference type="HOGENOM" id="CLU_2799311_0_0_1"/>
<dbReference type="InParanoid" id="Q55H65"/>
<dbReference type="PRO" id="PR:Q55H65"/>
<dbReference type="Proteomes" id="UP000002195">
    <property type="component" value="Chromosome 1"/>
</dbReference>
<reference key="1">
    <citation type="journal article" date="2005" name="Nature">
        <title>The genome of the social amoeba Dictyostelium discoideum.</title>
        <authorList>
            <person name="Eichinger L."/>
            <person name="Pachebat J.A."/>
            <person name="Gloeckner G."/>
            <person name="Rajandream M.A."/>
            <person name="Sucgang R."/>
            <person name="Berriman M."/>
            <person name="Song J."/>
            <person name="Olsen R."/>
            <person name="Szafranski K."/>
            <person name="Xu Q."/>
            <person name="Tunggal B."/>
            <person name="Kummerfeld S."/>
            <person name="Madera M."/>
            <person name="Konfortov B.A."/>
            <person name="Rivero F."/>
            <person name="Bankier A.T."/>
            <person name="Lehmann R."/>
            <person name="Hamlin N."/>
            <person name="Davies R."/>
            <person name="Gaudet P."/>
            <person name="Fey P."/>
            <person name="Pilcher K."/>
            <person name="Chen G."/>
            <person name="Saunders D."/>
            <person name="Sodergren E.J."/>
            <person name="Davis P."/>
            <person name="Kerhornou A."/>
            <person name="Nie X."/>
            <person name="Hall N."/>
            <person name="Anjard C."/>
            <person name="Hemphill L."/>
            <person name="Bason N."/>
            <person name="Farbrother P."/>
            <person name="Desany B."/>
            <person name="Just E."/>
            <person name="Morio T."/>
            <person name="Rost R."/>
            <person name="Churcher C.M."/>
            <person name="Cooper J."/>
            <person name="Haydock S."/>
            <person name="van Driessche N."/>
            <person name="Cronin A."/>
            <person name="Goodhead I."/>
            <person name="Muzny D.M."/>
            <person name="Mourier T."/>
            <person name="Pain A."/>
            <person name="Lu M."/>
            <person name="Harper D."/>
            <person name="Lindsay R."/>
            <person name="Hauser H."/>
            <person name="James K.D."/>
            <person name="Quiles M."/>
            <person name="Madan Babu M."/>
            <person name="Saito T."/>
            <person name="Buchrieser C."/>
            <person name="Wardroper A."/>
            <person name="Felder M."/>
            <person name="Thangavelu M."/>
            <person name="Johnson D."/>
            <person name="Knights A."/>
            <person name="Loulseged H."/>
            <person name="Mungall K.L."/>
            <person name="Oliver K."/>
            <person name="Price C."/>
            <person name="Quail M.A."/>
            <person name="Urushihara H."/>
            <person name="Hernandez J."/>
            <person name="Rabbinowitsch E."/>
            <person name="Steffen D."/>
            <person name="Sanders M."/>
            <person name="Ma J."/>
            <person name="Kohara Y."/>
            <person name="Sharp S."/>
            <person name="Simmonds M.N."/>
            <person name="Spiegler S."/>
            <person name="Tivey A."/>
            <person name="Sugano S."/>
            <person name="White B."/>
            <person name="Walker D."/>
            <person name="Woodward J.R."/>
            <person name="Winckler T."/>
            <person name="Tanaka Y."/>
            <person name="Shaulsky G."/>
            <person name="Schleicher M."/>
            <person name="Weinstock G.M."/>
            <person name="Rosenthal A."/>
            <person name="Cox E.C."/>
            <person name="Chisholm R.L."/>
            <person name="Gibbs R.A."/>
            <person name="Loomis W.F."/>
            <person name="Platzer M."/>
            <person name="Kay R.R."/>
            <person name="Williams J.G."/>
            <person name="Dear P.H."/>
            <person name="Noegel A.A."/>
            <person name="Barrell B.G."/>
            <person name="Kuspa A."/>
        </authorList>
    </citation>
    <scope>NUCLEOTIDE SEQUENCE [LARGE SCALE GENOMIC DNA]</scope>
    <source>
        <strain>AX4</strain>
    </source>
</reference>
<feature type="chain" id="PRO_0000348103" description="Putative uncharacterized protein DDB_G0267218">
    <location>
        <begin position="1"/>
        <end position="68"/>
    </location>
</feature>
<feature type="region of interest" description="Disordered" evidence="1">
    <location>
        <begin position="1"/>
        <end position="68"/>
    </location>
</feature>
<feature type="compositionally biased region" description="Basic and acidic residues" evidence="1">
    <location>
        <begin position="9"/>
        <end position="34"/>
    </location>
</feature>
<feature type="compositionally biased region" description="Acidic residues" evidence="1">
    <location>
        <begin position="42"/>
        <end position="51"/>
    </location>
</feature>
<name>Y6457_DICDI</name>
<proteinExistence type="predicted"/>
<keyword id="KW-1185">Reference proteome</keyword>
<organism>
    <name type="scientific">Dictyostelium discoideum</name>
    <name type="common">Social amoeba</name>
    <dbReference type="NCBI Taxonomy" id="44689"/>
    <lineage>
        <taxon>Eukaryota</taxon>
        <taxon>Amoebozoa</taxon>
        <taxon>Evosea</taxon>
        <taxon>Eumycetozoa</taxon>
        <taxon>Dictyostelia</taxon>
        <taxon>Dictyosteliales</taxon>
        <taxon>Dictyosteliaceae</taxon>
        <taxon>Dictyostelium</taxon>
    </lineage>
</organism>
<accession>Q55H65</accession>
<evidence type="ECO:0000256" key="1">
    <source>
        <dbReference type="SAM" id="MobiDB-lite"/>
    </source>
</evidence>
<sequence length="68" mass="8134">METIIRRFSPKEKEKEKEKEEKDEKSKDKKEPIKTRSKSKNDEEEEEDEQELVQGKPKGNSKNIKTKK</sequence>
<gene>
    <name type="ORF">DDB_G0267218</name>
</gene>